<keyword id="KW-0903">Direct protein sequencing</keyword>
<keyword id="KW-1015">Disulfide bond</keyword>
<keyword id="KW-0960">Knottin</keyword>
<keyword id="KW-0611">Plant defense</keyword>
<accession>P58437</accession>
<name>CYO5_VIOOD</name>
<evidence type="ECO:0000255" key="1">
    <source>
        <dbReference type="PROSITE-ProRule" id="PRU00395"/>
    </source>
</evidence>
<evidence type="ECO:0000269" key="2">
    <source>
    </source>
</evidence>
<evidence type="ECO:0000305" key="3"/>
<protein>
    <recommendedName>
        <fullName>Cycloviolacin-O5</fullName>
    </recommendedName>
</protein>
<reference key="1">
    <citation type="journal article" date="1999" name="J. Mol. Biol.">
        <title>Plant cyclotides: a unique family of cyclic and knotted proteins that defines the cyclic cystine knot structural motif.</title>
        <authorList>
            <person name="Craik D.J."/>
            <person name="Daly N.L."/>
            <person name="Bond T."/>
            <person name="Waine C."/>
        </authorList>
    </citation>
    <scope>PROTEIN SEQUENCE</scope>
</reference>
<reference key="2">
    <citation type="journal article" date="2006" name="Biochem. J.">
        <title>A novel suite of cyclotides from Viola odorata: sequence variation and the implications for structure, function and stability.</title>
        <authorList>
            <person name="Ireland D.C."/>
            <person name="Colgrave M.L."/>
            <person name="Craik D.J."/>
        </authorList>
    </citation>
    <scope>PROTEIN SEQUENCE</scope>
    <scope>MASS SPECTROMETRY</scope>
</reference>
<organism>
    <name type="scientific">Viola odorata</name>
    <name type="common">Sweet violet</name>
    <dbReference type="NCBI Taxonomy" id="97441"/>
    <lineage>
        <taxon>Eukaryota</taxon>
        <taxon>Viridiplantae</taxon>
        <taxon>Streptophyta</taxon>
        <taxon>Embryophyta</taxon>
        <taxon>Tracheophyta</taxon>
        <taxon>Spermatophyta</taxon>
        <taxon>Magnoliopsida</taxon>
        <taxon>eudicotyledons</taxon>
        <taxon>Gunneridae</taxon>
        <taxon>Pentapetalae</taxon>
        <taxon>rosids</taxon>
        <taxon>fabids</taxon>
        <taxon>Malpighiales</taxon>
        <taxon>Violaceae</taxon>
        <taxon>Viola</taxon>
        <taxon>Viola subgen. Viola</taxon>
        <taxon>Viola sect. Viola</taxon>
        <taxon>Viola subsect. Viola</taxon>
    </lineage>
</organism>
<comment type="function">
    <text>Probably participates in a plant defense mechanism.</text>
</comment>
<comment type="domain">
    <text>The presence of a 'disulfide through disulfide knot' structurally defines this protein as a knottin.</text>
</comment>
<comment type="PTM">
    <text>This is a cyclic peptide.</text>
</comment>
<comment type="mass spectrometry"/>
<comment type="similarity">
    <text evidence="1">Belongs to the cyclotide family. Bracelet subfamily.</text>
</comment>
<comment type="caution">
    <text evidence="3">This peptide is cyclic. The start position was chosen by similarity to OAK1 (kalata-B1) for which the DNA sequence is known.</text>
</comment>
<dbReference type="SMR" id="P58437"/>
<dbReference type="GO" id="GO:0006952">
    <property type="term" value="P:defense response"/>
    <property type="evidence" value="ECO:0000250"/>
    <property type="project" value="UniProtKB"/>
</dbReference>
<dbReference type="InterPro" id="IPR005535">
    <property type="entry name" value="Cyclotide"/>
</dbReference>
<dbReference type="InterPro" id="IPR012323">
    <property type="entry name" value="Cyclotide_bracelet_CS"/>
</dbReference>
<dbReference type="InterPro" id="IPR036146">
    <property type="entry name" value="Cyclotide_sf"/>
</dbReference>
<dbReference type="Pfam" id="PF03784">
    <property type="entry name" value="Cyclotide"/>
    <property type="match status" value="1"/>
</dbReference>
<dbReference type="PIRSF" id="PIRSF037891">
    <property type="entry name" value="Cycloviolacin"/>
    <property type="match status" value="1"/>
</dbReference>
<dbReference type="SUPFAM" id="SSF57038">
    <property type="entry name" value="Cyclotides"/>
    <property type="match status" value="1"/>
</dbReference>
<dbReference type="PROSITE" id="PS51052">
    <property type="entry name" value="CYCLOTIDE"/>
    <property type="match status" value="1"/>
</dbReference>
<dbReference type="PROSITE" id="PS60008">
    <property type="entry name" value="CYCLOTIDE_BRACELET"/>
    <property type="match status" value="1"/>
</dbReference>
<proteinExistence type="evidence at protein level"/>
<sequence>GTPCGESCVWIPCISSAVGCSCKNKVCYKN</sequence>
<feature type="peptide" id="PRO_0000043613" description="Cycloviolacin-O5">
    <location>
        <begin position="1"/>
        <end position="30"/>
    </location>
</feature>
<feature type="disulfide bond">
    <location>
        <begin position="4"/>
        <end position="20"/>
    </location>
</feature>
<feature type="disulfide bond">
    <location>
        <begin position="8"/>
        <end position="22"/>
    </location>
</feature>
<feature type="disulfide bond">
    <location>
        <begin position="13"/>
        <end position="27"/>
    </location>
</feature>
<feature type="cross-link" description="Cyclopeptide (Gly-Asn)">
    <location>
        <begin position="1"/>
        <end position="30"/>
    </location>
</feature>